<keyword id="KW-0520">NAD</keyword>
<keyword id="KW-0560">Oxidoreductase</keyword>
<keyword id="KW-0816">Tricarboxylic acid cycle</keyword>
<comment type="function">
    <text evidence="1">Catalyzes the reversible oxidation of malate to oxaloacetate.</text>
</comment>
<comment type="catalytic activity">
    <reaction evidence="2">
        <text>(S)-malate + NAD(+) = oxaloacetate + NADH + H(+)</text>
        <dbReference type="Rhea" id="RHEA:21432"/>
        <dbReference type="ChEBI" id="CHEBI:15378"/>
        <dbReference type="ChEBI" id="CHEBI:15589"/>
        <dbReference type="ChEBI" id="CHEBI:16452"/>
        <dbReference type="ChEBI" id="CHEBI:57540"/>
        <dbReference type="ChEBI" id="CHEBI:57945"/>
        <dbReference type="EC" id="1.1.1.37"/>
    </reaction>
</comment>
<comment type="subunit">
    <text evidence="1">Homodimer.</text>
</comment>
<comment type="similarity">
    <text evidence="3">Belongs to the LDH/MDH superfamily. MDH type 1 family.</text>
</comment>
<gene>
    <name type="primary">mdh</name>
</gene>
<feature type="chain" id="PRO_0000113311" description="Malate dehydrogenase">
    <location>
        <begin position="1" status="less than"/>
        <end position="225" status="greater than"/>
    </location>
</feature>
<feature type="active site" description="Proton acceptor" evidence="1">
    <location>
        <position position="144"/>
    </location>
</feature>
<feature type="binding site" evidence="1">
    <location>
        <position position="1"/>
    </location>
    <ligand>
        <name>NAD(+)</name>
        <dbReference type="ChEBI" id="CHEBI:57540"/>
    </ligand>
</feature>
<feature type="binding site" evidence="2">
    <location>
        <position position="48"/>
    </location>
    <ligand>
        <name>substrate</name>
    </ligand>
</feature>
<feature type="binding site" evidence="2">
    <location>
        <position position="54"/>
    </location>
    <ligand>
        <name>substrate</name>
    </ligand>
</feature>
<feature type="binding site" evidence="1">
    <location>
        <position position="61"/>
    </location>
    <ligand>
        <name>NAD(+)</name>
        <dbReference type="ChEBI" id="CHEBI:57540"/>
    </ligand>
</feature>
<feature type="binding site" evidence="1">
    <location>
        <begin position="84"/>
        <end position="86"/>
    </location>
    <ligand>
        <name>NAD(+)</name>
        <dbReference type="ChEBI" id="CHEBI:57540"/>
    </ligand>
</feature>
<feature type="binding site" evidence="2">
    <location>
        <position position="86"/>
    </location>
    <ligand>
        <name>substrate</name>
    </ligand>
</feature>
<feature type="binding site" evidence="2">
    <location>
        <position position="120"/>
    </location>
    <ligand>
        <name>substrate</name>
    </ligand>
</feature>
<feature type="binding site" evidence="1">
    <location>
        <position position="194"/>
    </location>
    <ligand>
        <name>NAD(+)</name>
        <dbReference type="ChEBI" id="CHEBI:57540"/>
    </ligand>
</feature>
<feature type="non-terminal residue">
    <location>
        <position position="1"/>
    </location>
</feature>
<feature type="non-terminal residue">
    <location>
        <position position="225"/>
    </location>
</feature>
<sequence length="225" mass="23055">DIAPVTPGVAVDLSHIPTDVKIKGFSGEDATPALEGADVVLISAGVARKPGMDRSDLFNVNAGIVKNLVQQIAKTSPQACIGIITNPVNTTVAIAAEVLKKAGVYDKNKLFGVTTLDIIRSNTFVAELKGKSSSDVEVPVIGGHSGVTILPLLSQIAGVSFSEQEVADLTKRIQNAGTEVVEAKAGGGSATLSMGQAAARFGLSLVRAMQGEKGVVECAYVEGDG</sequence>
<protein>
    <recommendedName>
        <fullName>Malate dehydrogenase</fullName>
        <ecNumber>1.1.1.37</ecNumber>
    </recommendedName>
</protein>
<reference key="1">
    <citation type="journal article" date="2004" name="Syst. Appl. Microbiol.">
        <title>Klebsiella variicola, a novel species with clinical and plant-associated isolates.</title>
        <authorList>
            <person name="Rosenblueth M."/>
            <person name="Martinez L."/>
            <person name="Silva J."/>
            <person name="Martinez-Romero E."/>
        </authorList>
    </citation>
    <scope>NUCLEOTIDE SEQUENCE [GENOMIC DNA]</scope>
    <source>
        <strain>ATCC 33257 / DSM 2687 / JCM 1687 / NBRC 14941 / NCTC 13038 / VTT-E-97854</strain>
    </source>
</reference>
<accession>P61895</accession>
<dbReference type="EC" id="1.1.1.37"/>
<dbReference type="EMBL" id="AY367381">
    <property type="protein sequence ID" value="AAQ72407.1"/>
    <property type="molecule type" value="Genomic_DNA"/>
</dbReference>
<dbReference type="SMR" id="P61895"/>
<dbReference type="GO" id="GO:0005737">
    <property type="term" value="C:cytoplasm"/>
    <property type="evidence" value="ECO:0007669"/>
    <property type="project" value="TreeGrafter"/>
</dbReference>
<dbReference type="GO" id="GO:0030060">
    <property type="term" value="F:L-malate dehydrogenase (NAD+) activity"/>
    <property type="evidence" value="ECO:0007669"/>
    <property type="project" value="UniProtKB-EC"/>
</dbReference>
<dbReference type="GO" id="GO:0006108">
    <property type="term" value="P:malate metabolic process"/>
    <property type="evidence" value="ECO:0007669"/>
    <property type="project" value="InterPro"/>
</dbReference>
<dbReference type="GO" id="GO:0006099">
    <property type="term" value="P:tricarboxylic acid cycle"/>
    <property type="evidence" value="ECO:0007669"/>
    <property type="project" value="UniProtKB-KW"/>
</dbReference>
<dbReference type="FunFam" id="3.40.50.720:FF:000268">
    <property type="entry name" value="Malate dehydrogenase"/>
    <property type="match status" value="1"/>
</dbReference>
<dbReference type="FunFam" id="3.90.110.10:FF:000001">
    <property type="entry name" value="Malate dehydrogenase"/>
    <property type="match status" value="1"/>
</dbReference>
<dbReference type="Gene3D" id="3.90.110.10">
    <property type="entry name" value="Lactate dehydrogenase/glycoside hydrolase, family 4, C-terminal"/>
    <property type="match status" value="1"/>
</dbReference>
<dbReference type="Gene3D" id="3.40.50.720">
    <property type="entry name" value="NAD(P)-binding Rossmann-like Domain"/>
    <property type="match status" value="1"/>
</dbReference>
<dbReference type="InterPro" id="IPR022383">
    <property type="entry name" value="Lactate/malate_DH_C"/>
</dbReference>
<dbReference type="InterPro" id="IPR001236">
    <property type="entry name" value="Lactate/malate_DH_N"/>
</dbReference>
<dbReference type="InterPro" id="IPR015955">
    <property type="entry name" value="Lactate_DH/Glyco_Ohase_4_C"/>
</dbReference>
<dbReference type="InterPro" id="IPR001252">
    <property type="entry name" value="Malate_DH_AS"/>
</dbReference>
<dbReference type="InterPro" id="IPR010097">
    <property type="entry name" value="Malate_DH_type1"/>
</dbReference>
<dbReference type="InterPro" id="IPR036291">
    <property type="entry name" value="NAD(P)-bd_dom_sf"/>
</dbReference>
<dbReference type="NCBIfam" id="TIGR01772">
    <property type="entry name" value="MDH_euk_gproteo"/>
    <property type="match status" value="1"/>
</dbReference>
<dbReference type="PANTHER" id="PTHR11540">
    <property type="entry name" value="MALATE AND LACTATE DEHYDROGENASE"/>
    <property type="match status" value="1"/>
</dbReference>
<dbReference type="PANTHER" id="PTHR11540:SF16">
    <property type="entry name" value="MALATE DEHYDROGENASE, MITOCHONDRIAL"/>
    <property type="match status" value="1"/>
</dbReference>
<dbReference type="Pfam" id="PF02866">
    <property type="entry name" value="Ldh_1_C"/>
    <property type="match status" value="1"/>
</dbReference>
<dbReference type="Pfam" id="PF00056">
    <property type="entry name" value="Ldh_1_N"/>
    <property type="match status" value="1"/>
</dbReference>
<dbReference type="SUPFAM" id="SSF56327">
    <property type="entry name" value="LDH C-terminal domain-like"/>
    <property type="match status" value="1"/>
</dbReference>
<dbReference type="SUPFAM" id="SSF51735">
    <property type="entry name" value="NAD(P)-binding Rossmann-fold domains"/>
    <property type="match status" value="1"/>
</dbReference>
<dbReference type="PROSITE" id="PS00068">
    <property type="entry name" value="MDH"/>
    <property type="match status" value="1"/>
</dbReference>
<name>MDH_RAOTE</name>
<proteinExistence type="inferred from homology"/>
<evidence type="ECO:0000250" key="1"/>
<evidence type="ECO:0000255" key="2">
    <source>
        <dbReference type="PROSITE-ProRule" id="PRU10004"/>
    </source>
</evidence>
<evidence type="ECO:0000305" key="3"/>
<organism>
    <name type="scientific">Raoultella terrigena</name>
    <name type="common">Klebsiella terrigena</name>
    <dbReference type="NCBI Taxonomy" id="577"/>
    <lineage>
        <taxon>Bacteria</taxon>
        <taxon>Pseudomonadati</taxon>
        <taxon>Pseudomonadota</taxon>
        <taxon>Gammaproteobacteria</taxon>
        <taxon>Enterobacterales</taxon>
        <taxon>Enterobacteriaceae</taxon>
        <taxon>Klebsiella/Raoultella group</taxon>
        <taxon>Raoultella</taxon>
    </lineage>
</organism>